<name>VATA_YEAST</name>
<keyword id="KW-0002">3D-structure</keyword>
<keyword id="KW-0007">Acetylation</keyword>
<keyword id="KW-0067">ATP-binding</keyword>
<keyword id="KW-0068">Autocatalytic cleavage</keyword>
<keyword id="KW-0903">Direct protein sequencing</keyword>
<keyword id="KW-0238">DNA-binding</keyword>
<keyword id="KW-0255">Endonuclease</keyword>
<keyword id="KW-0375">Hydrogen ion transport</keyword>
<keyword id="KW-0378">Hydrolase</keyword>
<keyword id="KW-0404">Intron homing</keyword>
<keyword id="KW-0406">Ion transport</keyword>
<keyword id="KW-0472">Membrane</keyword>
<keyword id="KW-0540">Nuclease</keyword>
<keyword id="KW-0547">Nucleotide-binding</keyword>
<keyword id="KW-0597">Phosphoprotein</keyword>
<keyword id="KW-0651">Protein splicing</keyword>
<keyword id="KW-1185">Reference proteome</keyword>
<keyword id="KW-1278">Translocase</keyword>
<keyword id="KW-0813">Transport</keyword>
<keyword id="KW-0926">Vacuole</keyword>
<feature type="initiator methionine" description="Removed" evidence="5 10 14 25">
    <location>
        <position position="1"/>
    </location>
</feature>
<feature type="chain" id="PRO_0000002458" description="V-type proton ATPase catalytic subunit A, 1st part">
    <location>
        <begin position="2"/>
        <end position="283"/>
    </location>
</feature>
<feature type="chain" id="PRO_0000002459" description="Endonuclease PI-SceI">
    <location>
        <begin position="284"/>
        <end position="737"/>
    </location>
</feature>
<feature type="chain" id="PRO_0000002460" description="V-type proton ATPase catalytic subunit A, 2nd part">
    <location>
        <begin position="738"/>
        <end position="1071"/>
    </location>
</feature>
<feature type="domain" description="DOD-type homing endonuclease" evidence="2">
    <location>
        <begin position="494"/>
        <end position="642"/>
    </location>
</feature>
<feature type="binding site" evidence="1">
    <location>
        <begin position="257"/>
        <end position="264"/>
    </location>
    <ligand>
        <name>ATP</name>
        <dbReference type="ChEBI" id="CHEBI:30616"/>
    </ligand>
</feature>
<feature type="modified residue" description="N-acetylalanine" evidence="14 25">
    <location>
        <position position="2"/>
    </location>
</feature>
<feature type="modified residue" description="Phosphothreonine" evidence="24">
    <location>
        <position position="131"/>
    </location>
</feature>
<feature type="modified residue" description="Phosphoserine" evidence="24">
    <location>
        <position position="858"/>
    </location>
</feature>
<feature type="modified residue" description="Phosphoserine" evidence="24">
    <location>
        <position position="928"/>
    </location>
</feature>
<feature type="mutagenesis site" description="Reduces splicing reaction speed. Inhibits splicing; when associated with N-362; S-737 and S-738 in X10SSS VDE." evidence="3 5 6">
    <original>C</original>
    <variation>S</variation>
    <location>
        <position position="284"/>
    </location>
</feature>
<feature type="mutagenesis site" description="Inhibits splicing; when associated with S-284; S-737 and S-738 in X10SSS VDE." evidence="5">
    <original>H</original>
    <variation>N</variation>
    <location>
        <position position="362"/>
    </location>
</feature>
<feature type="mutagenesis site" description="Inhibits splicing; when associated with S-284; N-362 and S-738 in X10SSS VDE." evidence="3 5">
    <original>N</original>
    <variation>S</variation>
    <location>
        <position position="737"/>
    </location>
</feature>
<feature type="mutagenesis site" description="Reduces splicing reaction speed. Inhibits splicing; when associated with S-284; N-362 and S-737 in X10SSS VDE." evidence="5 6">
    <original>C</original>
    <variation>S</variation>
    <location>
        <position position="738"/>
    </location>
</feature>
<feature type="sequence conflict" description="In Ref. 8; AAB63978." evidence="16" ref="8">
    <original>G</original>
    <variation>D</variation>
    <location>
        <position position="875"/>
    </location>
</feature>
<feature type="strand" evidence="33">
    <location>
        <begin position="26"/>
        <end position="32"/>
    </location>
</feature>
<feature type="strand" evidence="33">
    <location>
        <begin position="35"/>
        <end position="40"/>
    </location>
</feature>
<feature type="strand" evidence="33">
    <location>
        <begin position="48"/>
        <end position="52"/>
    </location>
</feature>
<feature type="turn" evidence="33">
    <location>
        <begin position="53"/>
        <end position="56"/>
    </location>
</feature>
<feature type="strand" evidence="33">
    <location>
        <begin position="57"/>
        <end position="63"/>
    </location>
</feature>
<feature type="strand" evidence="33">
    <location>
        <begin position="69"/>
        <end position="75"/>
    </location>
</feature>
<feature type="strand" evidence="33">
    <location>
        <begin position="85"/>
        <end position="92"/>
    </location>
</feature>
<feature type="strand" evidence="33">
    <location>
        <begin position="94"/>
        <end position="98"/>
    </location>
</feature>
<feature type="helix" evidence="34">
    <location>
        <begin position="101"/>
        <end position="103"/>
    </location>
</feature>
<feature type="strand" evidence="33">
    <location>
        <begin position="108"/>
        <end position="110"/>
    </location>
</feature>
<feature type="helix" evidence="33">
    <location>
        <begin position="113"/>
        <end position="120"/>
    </location>
</feature>
<feature type="strand" evidence="33">
    <location>
        <begin position="122"/>
        <end position="124"/>
    </location>
</feature>
<feature type="strand" evidence="35">
    <location>
        <begin position="136"/>
        <end position="138"/>
    </location>
</feature>
<feature type="strand" evidence="33">
    <location>
        <begin position="140"/>
        <end position="144"/>
    </location>
</feature>
<feature type="strand" evidence="33">
    <location>
        <begin position="158"/>
        <end position="162"/>
    </location>
</feature>
<feature type="strand" evidence="33">
    <location>
        <begin position="166"/>
        <end position="168"/>
    </location>
</feature>
<feature type="strand" evidence="33">
    <location>
        <begin position="170"/>
        <end position="174"/>
    </location>
</feature>
<feature type="strand" evidence="33">
    <location>
        <begin position="181"/>
        <end position="186"/>
    </location>
</feature>
<feature type="strand" evidence="33">
    <location>
        <begin position="189"/>
        <end position="192"/>
    </location>
</feature>
<feature type="strand" evidence="33">
    <location>
        <begin position="194"/>
        <end position="196"/>
    </location>
</feature>
<feature type="strand" evidence="33">
    <location>
        <begin position="199"/>
        <end position="203"/>
    </location>
</feature>
<feature type="strand" evidence="33">
    <location>
        <begin position="206"/>
        <end position="210"/>
    </location>
</feature>
<feature type="strand" evidence="33">
    <location>
        <begin position="214"/>
        <end position="220"/>
    </location>
</feature>
<feature type="strand" evidence="33">
    <location>
        <begin position="225"/>
        <end position="227"/>
    </location>
</feature>
<feature type="helix" evidence="33">
    <location>
        <begin position="239"/>
        <end position="243"/>
    </location>
</feature>
<feature type="strand" evidence="34">
    <location>
        <begin position="252"/>
        <end position="254"/>
    </location>
</feature>
<feature type="helix" evidence="33">
    <location>
        <begin position="263"/>
        <end position="273"/>
    </location>
</feature>
<feature type="strand" evidence="36">
    <location>
        <begin position="277"/>
        <end position="282"/>
    </location>
</feature>
<feature type="strand" evidence="28">
    <location>
        <begin position="283"/>
        <end position="285"/>
    </location>
</feature>
<feature type="strand" evidence="28">
    <location>
        <begin position="290"/>
        <end position="293"/>
    </location>
</feature>
<feature type="strand" evidence="28">
    <location>
        <begin position="298"/>
        <end position="300"/>
    </location>
</feature>
<feature type="helix" evidence="28">
    <location>
        <begin position="301"/>
        <end position="303"/>
    </location>
</feature>
<feature type="strand" evidence="28">
    <location>
        <begin position="309"/>
        <end position="312"/>
    </location>
</feature>
<feature type="strand" evidence="28">
    <location>
        <begin position="315"/>
        <end position="322"/>
    </location>
</feature>
<feature type="strand" evidence="28">
    <location>
        <begin position="325"/>
        <end position="335"/>
    </location>
</feature>
<feature type="strand" evidence="27">
    <location>
        <begin position="343"/>
        <end position="345"/>
    </location>
</feature>
<feature type="strand" evidence="27">
    <location>
        <begin position="347"/>
        <end position="349"/>
    </location>
</feature>
<feature type="strand" evidence="28">
    <location>
        <begin position="355"/>
        <end position="359"/>
    </location>
</feature>
<feature type="strand" evidence="28">
    <location>
        <begin position="363"/>
        <end position="369"/>
    </location>
</feature>
<feature type="strand" evidence="28">
    <location>
        <begin position="372"/>
        <end position="379"/>
    </location>
</feature>
<feature type="strand" evidence="28">
    <location>
        <begin position="382"/>
        <end position="396"/>
    </location>
</feature>
<feature type="strand" evidence="31">
    <location>
        <begin position="398"/>
        <end position="400"/>
    </location>
</feature>
<feature type="strand" evidence="28">
    <location>
        <begin position="402"/>
        <end position="414"/>
    </location>
</feature>
<feature type="helix" evidence="28">
    <location>
        <begin position="415"/>
        <end position="417"/>
    </location>
</feature>
<feature type="helix" evidence="28">
    <location>
        <begin position="420"/>
        <end position="431"/>
    </location>
</feature>
<feature type="strand" evidence="28">
    <location>
        <begin position="434"/>
        <end position="443"/>
    </location>
</feature>
<feature type="helix" evidence="28">
    <location>
        <begin position="444"/>
        <end position="449"/>
    </location>
</feature>
<feature type="helix" evidence="28">
    <location>
        <begin position="452"/>
        <end position="457"/>
    </location>
</feature>
<feature type="strand" evidence="28">
    <location>
        <begin position="459"/>
        <end position="462"/>
    </location>
</feature>
<feature type="turn" evidence="26">
    <location>
        <begin position="471"/>
        <end position="474"/>
    </location>
</feature>
<feature type="strand" evidence="31">
    <location>
        <begin position="479"/>
        <end position="481"/>
    </location>
</feature>
<feature type="strand" evidence="26">
    <location>
        <begin position="485"/>
        <end position="487"/>
    </location>
</feature>
<feature type="helix" evidence="26">
    <location>
        <begin position="488"/>
        <end position="501"/>
    </location>
</feature>
<feature type="strand" evidence="27">
    <location>
        <begin position="506"/>
        <end position="514"/>
    </location>
</feature>
<feature type="helix" evidence="26">
    <location>
        <begin position="516"/>
        <end position="528"/>
    </location>
</feature>
<feature type="strand" evidence="29">
    <location>
        <begin position="531"/>
        <end position="533"/>
    </location>
</feature>
<feature type="strand" evidence="27">
    <location>
        <begin position="534"/>
        <end position="537"/>
    </location>
</feature>
<feature type="strand" evidence="30">
    <location>
        <begin position="538"/>
        <end position="540"/>
    </location>
</feature>
<feature type="turn" evidence="27">
    <location>
        <begin position="541"/>
        <end position="543"/>
    </location>
</feature>
<feature type="strand" evidence="27">
    <location>
        <begin position="544"/>
        <end position="548"/>
    </location>
</feature>
<feature type="turn" evidence="29">
    <location>
        <begin position="556"/>
        <end position="559"/>
    </location>
</feature>
<feature type="helix" evidence="26">
    <location>
        <begin position="570"/>
        <end position="575"/>
    </location>
</feature>
<feature type="strand" evidence="26">
    <location>
        <begin position="579"/>
        <end position="584"/>
    </location>
</feature>
<feature type="helix" evidence="26">
    <location>
        <begin position="588"/>
        <end position="591"/>
    </location>
</feature>
<feature type="helix" evidence="26">
    <location>
        <begin position="595"/>
        <end position="609"/>
    </location>
</feature>
<feature type="strand" evidence="27">
    <location>
        <begin position="610"/>
        <end position="613"/>
    </location>
</feature>
<feature type="strand" evidence="26">
    <location>
        <begin position="619"/>
        <end position="625"/>
    </location>
</feature>
<feature type="helix" evidence="26">
    <location>
        <begin position="627"/>
        <end position="639"/>
    </location>
</feature>
<feature type="strand" evidence="26">
    <location>
        <begin position="643"/>
        <end position="650"/>
    </location>
</feature>
<feature type="helix" evidence="26">
    <location>
        <begin position="654"/>
        <end position="656"/>
    </location>
</feature>
<feature type="strand" evidence="27">
    <location>
        <begin position="657"/>
        <end position="659"/>
    </location>
</feature>
<feature type="strand" evidence="26">
    <location>
        <begin position="661"/>
        <end position="669"/>
    </location>
</feature>
<feature type="helix" evidence="26">
    <location>
        <begin position="672"/>
        <end position="678"/>
    </location>
</feature>
<feature type="turn" evidence="26">
    <location>
        <begin position="684"/>
        <end position="686"/>
    </location>
</feature>
<feature type="strand" evidence="29">
    <location>
        <begin position="692"/>
        <end position="694"/>
    </location>
</feature>
<feature type="strand" evidence="26">
    <location>
        <begin position="700"/>
        <end position="702"/>
    </location>
</feature>
<feature type="strand" evidence="26">
    <location>
        <begin position="704"/>
        <end position="714"/>
    </location>
</feature>
<feature type="strand" evidence="27">
    <location>
        <begin position="721"/>
        <end position="723"/>
    </location>
</feature>
<feature type="strand" evidence="26">
    <location>
        <begin position="725"/>
        <end position="729"/>
    </location>
</feature>
<feature type="strand" evidence="26">
    <location>
        <begin position="733"/>
        <end position="736"/>
    </location>
</feature>
<feature type="helix" evidence="33">
    <location>
        <begin position="742"/>
        <end position="751"/>
    </location>
</feature>
<feature type="turn" evidence="33">
    <location>
        <begin position="752"/>
        <end position="754"/>
    </location>
</feature>
<feature type="strand" evidence="34">
    <location>
        <begin position="755"/>
        <end position="757"/>
    </location>
</feature>
<feature type="helix" evidence="33">
    <location>
        <begin position="759"/>
        <end position="761"/>
    </location>
</feature>
<feature type="helix" evidence="33">
    <location>
        <begin position="766"/>
        <end position="769"/>
    </location>
</feature>
<feature type="strand" evidence="33">
    <location>
        <begin position="770"/>
        <end position="775"/>
    </location>
</feature>
<feature type="strand" evidence="36">
    <location>
        <begin position="777"/>
        <end position="779"/>
    </location>
</feature>
<feature type="helix" evidence="33">
    <location>
        <begin position="783"/>
        <end position="800"/>
    </location>
</feature>
<feature type="strand" evidence="33">
    <location>
        <begin position="804"/>
        <end position="810"/>
    </location>
</feature>
<feature type="helix" evidence="33">
    <location>
        <begin position="812"/>
        <end position="826"/>
    </location>
</feature>
<feature type="helix" evidence="32">
    <location>
        <begin position="832"/>
        <end position="834"/>
    </location>
</feature>
<feature type="helix" evidence="33">
    <location>
        <begin position="839"/>
        <end position="848"/>
    </location>
</feature>
<feature type="strand" evidence="33">
    <location>
        <begin position="856"/>
        <end position="859"/>
    </location>
</feature>
<feature type="strand" evidence="33">
    <location>
        <begin position="862"/>
        <end position="865"/>
    </location>
</feature>
<feature type="helix" evidence="34">
    <location>
        <begin position="874"/>
        <end position="876"/>
    </location>
</feature>
<feature type="helix" evidence="33">
    <location>
        <begin position="881"/>
        <end position="889"/>
    </location>
</feature>
<feature type="strand" evidence="33">
    <location>
        <begin position="891"/>
        <end position="893"/>
    </location>
</feature>
<feature type="helix" evidence="33">
    <location>
        <begin position="898"/>
        <end position="901"/>
    </location>
</feature>
<feature type="helix" evidence="33">
    <location>
        <begin position="902"/>
        <end position="904"/>
    </location>
</feature>
<feature type="turn" evidence="33">
    <location>
        <begin position="911"/>
        <end position="913"/>
    </location>
</feature>
<feature type="turn" evidence="33">
    <location>
        <begin position="917"/>
        <end position="922"/>
    </location>
</feature>
<feature type="helix" evidence="33">
    <location>
        <begin position="923"/>
        <end position="929"/>
    </location>
</feature>
<feature type="helix" evidence="33">
    <location>
        <begin position="933"/>
        <end position="957"/>
    </location>
</feature>
<feature type="strand" evidence="33">
    <location>
        <begin position="959"/>
        <end position="961"/>
    </location>
</feature>
<feature type="helix" evidence="33">
    <location>
        <begin position="964"/>
        <end position="979"/>
    </location>
</feature>
<feature type="turn" evidence="33">
    <location>
        <begin position="988"/>
        <end position="990"/>
    </location>
</feature>
<feature type="helix" evidence="33">
    <location>
        <begin position="995"/>
        <end position="1018"/>
    </location>
</feature>
<feature type="helix" evidence="33">
    <location>
        <begin position="1022"/>
        <end position="1028"/>
    </location>
</feature>
<feature type="helix" evidence="33">
    <location>
        <begin position="1030"/>
        <end position="1037"/>
    </location>
</feature>
<feature type="helix" evidence="33">
    <location>
        <begin position="1038"/>
        <end position="1041"/>
    </location>
</feature>
<feature type="helix" evidence="33">
    <location>
        <begin position="1044"/>
        <end position="1046"/>
    </location>
</feature>
<feature type="helix" evidence="33">
    <location>
        <begin position="1048"/>
        <end position="1069"/>
    </location>
</feature>
<sequence length="1071" mass="118637">MAGAIENARKEIKRISLEDHAESEYGAIYSVSGPVVIAENMIGCAMYELVKVGHDNLVGEVIRIDGDKATIQVYEETAGLTVGDPVLRTGKPLSVELGPGLMETIYDGIQRPLKAIKEESQSIYIPRGIDTPALDRTIKWQFTPGKFQVGDHISGGDIYGSVFENSLISSHKILLPPRSRGTITWIAPAGEYTLDEKILEVEFDGKKSDFTLYHTWPVRVPRPVTEKLSADYPLLTGQRVLDALFPCVQGGTTCIPGAFGCGKTVISQSLSKYSNSDAIIYVGCFAKGTNVLMADGSIECIENIEVGNKVMGKDGRPREVIKLPRGRETMYSVVQKSQHRAHKSDSSREVPELLKFTCNATHELVVRTPRSVRRLSRTIKGVEYFEVITFEMGQKKAPDGRIVELVKEVSKSYPISEGPERANELVESYRKASNKAYFEWTIEARDLSLLGSHVRKATYQTYAPILYENDHFFDYMQKSKFHLTIEGPKVLAYLLGLWIGDGLSDRATFSVDSRDTSLMERVTEYAEKLNLCAEYKDRKEPQVAKTVNLYSKVVRGNGIRNNLNTENPLWDAIVGLGFLKDGVKNIPSFLSTDNIGTRETFLAGLIDSDGYVTDEHGIKATIKTIHTSVRDGLVSLARSLGLVVSVNAEPAKVDMNGTKHKISYAIYMSGGDVLLNVLSKCAGSKKFRPAPAAAFARECRGFYFELQELKEDDYYGITLSDDSDHQFLLANQVVVHNCGERGNEMAEVLMEFPELYTEMSGTKEPIMKRTTLVANTSNMPVAAREASIYTGITLAEYFRDQGKNVSMIADSSSRWAEALREISGRLGEMPADQGFPAYLGAKLASFYERAGKAVALGSPDRTGSVSIVAAVSPAGGDFSDPVTTATLGITQVFWGLDKKLAQRKHFPSINTSVSYSKYTNVLNKFYDSNYPEFPVLRDRMKEILSNAEELEQVVQLVGKSALSDSDKITLDVATLIKEDFLQQNGYSTYDAFCPIWKTFDMMRAFISYHDEAQKAVANGANWSKLADSTGDVKHAVSSSKFFEPSRGEKEVHGEFEKLLSTMQERFAESTD</sequence>
<protein>
    <recommendedName>
        <fullName evidence="15">V-type proton ATPase catalytic subunit A</fullName>
        <shortName>V-ATPase subunit A</shortName>
        <ecNumber evidence="17 18">7.1.2.2</ecNumber>
    </recommendedName>
    <alternativeName>
        <fullName>Vacuolar proton pump subunit A</fullName>
    </alternativeName>
    <component>
        <recommendedName>
            <fullName>Endonuclease PI-SceI</fullName>
            <ecNumber>3.1.-.-</ecNumber>
        </recommendedName>
        <alternativeName>
            <fullName>Sce VMA intein</fullName>
        </alternativeName>
        <alternativeName>
            <fullName>VMA1-derived endonuclease</fullName>
            <shortName>VDE</shortName>
        </alternativeName>
    </component>
</protein>
<gene>
    <name evidence="15" type="primary">VMA1</name>
    <name type="synonym">CLS8</name>
    <name type="synonym">TFP1</name>
    <name type="ordered locus">YDL185W</name>
    <name type="ORF">D1286</name>
</gene>
<reference key="1">
    <citation type="journal article" date="1990" name="J. Biol. Chem.">
        <title>Molecular structure of a gene, VMA1, encoding the catalytic subunit of H(+)-translocating adenosine triphosphatase from vacuolar membranes of Saccharomyces cerevisiae.</title>
        <authorList>
            <person name="Hirata R."/>
            <person name="Ohsumi Y."/>
            <person name="Nakano A."/>
            <person name="Kawasaki H."/>
            <person name="Suzuki K."/>
            <person name="Anraku Y."/>
        </authorList>
    </citation>
    <scope>NUCLEOTIDE SEQUENCE [GENOMIC DNA]</scope>
    <scope>PROTEIN SEQUENCE OF 181-196; 815-820; 826-836; 862-879; 925-936 AND 1004-1013</scope>
    <scope>FUNCTION</scope>
    <scope>CATALYTIC ACTIVITY</scope>
    <scope>SUBCELLULAR LOCATION</scope>
    <source>
        <strain>ATCC 26786 / X2180-1A</strain>
    </source>
</reference>
<reference key="2">
    <citation type="journal article" date="1995" name="Yeast">
        <title>New open reading frames, one of which is similar to the nifV gene of Azotobacter vinelandii, found on a 12.5 kbp fragment of chromosome IV of Saccharomyces cerevisiae.</title>
        <authorList>
            <person name="Verhasselt P."/>
            <person name="Voet M."/>
            <person name="Volckaert G."/>
        </authorList>
    </citation>
    <scope>NUCLEOTIDE SEQUENCE [GENOMIC DNA]</scope>
    <source>
        <strain>ATCC 96604 / S288c / FY1679</strain>
    </source>
</reference>
<reference key="3">
    <citation type="journal article" date="1997" name="Nature">
        <title>The nucleotide sequence of Saccharomyces cerevisiae chromosome IV.</title>
        <authorList>
            <person name="Jacq C."/>
            <person name="Alt-Moerbe J."/>
            <person name="Andre B."/>
            <person name="Arnold W."/>
            <person name="Bahr A."/>
            <person name="Ballesta J.P.G."/>
            <person name="Bargues M."/>
            <person name="Baron L."/>
            <person name="Becker A."/>
            <person name="Biteau N."/>
            <person name="Bloecker H."/>
            <person name="Blugeon C."/>
            <person name="Boskovic J."/>
            <person name="Brandt P."/>
            <person name="Brueckner M."/>
            <person name="Buitrago M.J."/>
            <person name="Coster F."/>
            <person name="Delaveau T."/>
            <person name="del Rey F."/>
            <person name="Dujon B."/>
            <person name="Eide L.G."/>
            <person name="Garcia-Cantalejo J.M."/>
            <person name="Goffeau A."/>
            <person name="Gomez-Peris A."/>
            <person name="Granotier C."/>
            <person name="Hanemann V."/>
            <person name="Hankeln T."/>
            <person name="Hoheisel J.D."/>
            <person name="Jaeger W."/>
            <person name="Jimenez A."/>
            <person name="Jonniaux J.-L."/>
            <person name="Kraemer C."/>
            <person name="Kuester H."/>
            <person name="Laamanen P."/>
            <person name="Legros Y."/>
            <person name="Louis E.J."/>
            <person name="Moeller-Rieker S."/>
            <person name="Monnet A."/>
            <person name="Moro M."/>
            <person name="Mueller-Auer S."/>
            <person name="Nussbaumer B."/>
            <person name="Paricio N."/>
            <person name="Paulin L."/>
            <person name="Perea J."/>
            <person name="Perez-Alonso M."/>
            <person name="Perez-Ortin J.E."/>
            <person name="Pohl T.M."/>
            <person name="Prydz H."/>
            <person name="Purnelle B."/>
            <person name="Rasmussen S.W."/>
            <person name="Remacha M.A."/>
            <person name="Revuelta J.L."/>
            <person name="Rieger M."/>
            <person name="Salom D."/>
            <person name="Saluz H.P."/>
            <person name="Saiz J.E."/>
            <person name="Saren A.-M."/>
            <person name="Schaefer M."/>
            <person name="Scharfe M."/>
            <person name="Schmidt E.R."/>
            <person name="Schneider C."/>
            <person name="Scholler P."/>
            <person name="Schwarz S."/>
            <person name="Soler-Mira A."/>
            <person name="Urrestarazu L.A."/>
            <person name="Verhasselt P."/>
            <person name="Vissers S."/>
            <person name="Voet M."/>
            <person name="Volckaert G."/>
            <person name="Wagner G."/>
            <person name="Wambutt R."/>
            <person name="Wedler E."/>
            <person name="Wedler H."/>
            <person name="Woelfl S."/>
            <person name="Harris D.E."/>
            <person name="Bowman S."/>
            <person name="Brown D."/>
            <person name="Churcher C.M."/>
            <person name="Connor R."/>
            <person name="Dedman K."/>
            <person name="Gentles S."/>
            <person name="Hamlin N."/>
            <person name="Hunt S."/>
            <person name="Jones L."/>
            <person name="McDonald S."/>
            <person name="Murphy L.D."/>
            <person name="Niblett D."/>
            <person name="Odell C."/>
            <person name="Oliver K."/>
            <person name="Rajandream M.A."/>
            <person name="Richards C."/>
            <person name="Shore L."/>
            <person name="Walsh S.V."/>
            <person name="Barrell B.G."/>
            <person name="Dietrich F.S."/>
            <person name="Mulligan J.T."/>
            <person name="Allen E."/>
            <person name="Araujo R."/>
            <person name="Aviles E."/>
            <person name="Berno A."/>
            <person name="Carpenter J."/>
            <person name="Chen E."/>
            <person name="Cherry J.M."/>
            <person name="Chung E."/>
            <person name="Duncan M."/>
            <person name="Hunicke-Smith S."/>
            <person name="Hyman R.W."/>
            <person name="Komp C."/>
            <person name="Lashkari D."/>
            <person name="Lew H."/>
            <person name="Lin D."/>
            <person name="Mosedale D."/>
            <person name="Nakahara K."/>
            <person name="Namath A."/>
            <person name="Oefner P."/>
            <person name="Oh C."/>
            <person name="Petel F.X."/>
            <person name="Roberts D."/>
            <person name="Schramm S."/>
            <person name="Schroeder M."/>
            <person name="Shogren T."/>
            <person name="Shroff N."/>
            <person name="Winant A."/>
            <person name="Yelton M.A."/>
            <person name="Botstein D."/>
            <person name="Davis R.W."/>
            <person name="Johnston M."/>
            <person name="Andrews S."/>
            <person name="Brinkman R."/>
            <person name="Cooper J."/>
            <person name="Ding H."/>
            <person name="Du Z."/>
            <person name="Favello A."/>
            <person name="Fulton L."/>
            <person name="Gattung S."/>
            <person name="Greco T."/>
            <person name="Hallsworth K."/>
            <person name="Hawkins J."/>
            <person name="Hillier L.W."/>
            <person name="Jier M."/>
            <person name="Johnson D."/>
            <person name="Johnston L."/>
            <person name="Kirsten J."/>
            <person name="Kucaba T."/>
            <person name="Langston Y."/>
            <person name="Latreille P."/>
            <person name="Le T."/>
            <person name="Mardis E."/>
            <person name="Menezes S."/>
            <person name="Miller N."/>
            <person name="Nhan M."/>
            <person name="Pauley A."/>
            <person name="Peluso D."/>
            <person name="Rifkin L."/>
            <person name="Riles L."/>
            <person name="Taich A."/>
            <person name="Trevaskis E."/>
            <person name="Vignati D."/>
            <person name="Wilcox L."/>
            <person name="Wohldman P."/>
            <person name="Vaudin M."/>
            <person name="Wilson R."/>
            <person name="Waterston R."/>
            <person name="Albermann K."/>
            <person name="Hani J."/>
            <person name="Heumann K."/>
            <person name="Kleine K."/>
            <person name="Mewes H.-W."/>
            <person name="Zollner A."/>
            <person name="Zaccaria P."/>
        </authorList>
    </citation>
    <scope>NUCLEOTIDE SEQUENCE [LARGE SCALE GENOMIC DNA]</scope>
    <source>
        <strain>ATCC 204508 / S288c</strain>
    </source>
</reference>
<reference key="4">
    <citation type="journal article" date="2014" name="G3 (Bethesda)">
        <title>The reference genome sequence of Saccharomyces cerevisiae: Then and now.</title>
        <authorList>
            <person name="Engel S.R."/>
            <person name="Dietrich F.S."/>
            <person name="Fisk D.G."/>
            <person name="Binkley G."/>
            <person name="Balakrishnan R."/>
            <person name="Costanzo M.C."/>
            <person name="Dwight S.S."/>
            <person name="Hitz B.C."/>
            <person name="Karra K."/>
            <person name="Nash R.S."/>
            <person name="Weng S."/>
            <person name="Wong E.D."/>
            <person name="Lloyd P."/>
            <person name="Skrzypek M.S."/>
            <person name="Miyasato S.R."/>
            <person name="Simison M."/>
            <person name="Cherry J.M."/>
        </authorList>
    </citation>
    <scope>GENOME REANNOTATION</scope>
    <source>
        <strain>ATCC 204508 / S288c</strain>
    </source>
</reference>
<reference key="5">
    <citation type="journal article" date="1991" name="Mol. Cell. Biol.">
        <title>Protein phosphatase 2A in Saccharomyces cerevisiae: effects on cell growth and bud morphogenesis.</title>
        <authorList>
            <person name="Ronne H."/>
            <person name="Carlberg M."/>
            <person name="Hu G.-Z."/>
            <person name="Nehlin J.O."/>
        </authorList>
    </citation>
    <scope>NUCLEOTIDE SEQUENCE [GENOMIC DNA] OF 1-34</scope>
    <source>
        <strain>ATCC 208353 / W303-1A</strain>
    </source>
</reference>
<reference key="6">
    <citation type="submission" date="2005-10" db="UniProtKB">
        <authorList>
            <person name="Bienvenut W.V."/>
            <person name="Peters C."/>
        </authorList>
    </citation>
    <scope>PROTEIN SEQUENCE OF 2-10; 52-63; 115-136; 173-178; 181-207; 220-239; 264-272; 770-784; 804-814; 826-842; 853-861; 918-937; 940-959; 1004-1014 AND 1058-1065</scope>
    <scope>CLEAVAGE OF INITIATOR METHIONINE</scope>
    <scope>ACETYLATION AT ALA-2</scope>
    <scope>IDENTIFICATION BY MASS SPECTROMETRY</scope>
</reference>
<reference key="7">
    <citation type="journal article" date="2002" name="J. Mol. Biol.">
        <title>Protein-splicing reaction via a thiazolidine intermediate: crystal structure of the VMA1-derived endonuclease bearing the N and C-terminal propeptides.</title>
        <authorList>
            <person name="Mizutani R."/>
            <person name="Nogami S."/>
            <person name="Kawasaki M."/>
            <person name="Ohya Y."/>
            <person name="Anraku Y."/>
            <person name="Satow Y."/>
        </authorList>
    </citation>
    <scope>PROTEIN SEQUENCE OF 2-6</scope>
    <scope>CLEAVAGE OF INITIATOR METHIONINE</scope>
    <scope>MUTAGENESIS OF CYS-284; HIS-362; ASN-737 AND CYS-738</scope>
    <scope>X-RAY CRYSTALLOGRAPHY (2.1 ANGSTROMS) OF 274-747</scope>
</reference>
<reference key="8">
    <citation type="journal article" date="1988" name="Mol. Cell. Biol.">
        <title>A dominant trifluoperazine resistance gene from Saccharomyces cerevisiae has homology with F0F1 ATP synthase and confers calcium-sensitive growth.</title>
        <authorList>
            <person name="Shih C.K."/>
            <person name="Wagner R."/>
            <person name="Feinstein S."/>
            <person name="Kanik-Ennulat C."/>
            <person name="Neff N."/>
        </authorList>
    </citation>
    <scope>NUCLEOTIDE SEQUENCE [GENOMIC DNA] OF 41-1071</scope>
</reference>
<reference key="9">
    <citation type="journal article" date="1990" name="Science">
        <title>Protein splicing converts the yeast TFP1 gene product to the 69-kD subunit of the vacuolar H(+)-adenosine triphosphatase.</title>
        <authorList>
            <person name="Kane P.M."/>
            <person name="Yamashiro C.T."/>
            <person name="Wolczyk D.F."/>
            <person name="Neff N."/>
            <person name="Goebl M."/>
            <person name="Stevens T.H."/>
        </authorList>
    </citation>
    <scope>PROTEIN SPLICING</scope>
</reference>
<reference key="10">
    <citation type="journal article" date="1992" name="Biochem. Biophys. Res. Commun.">
        <title>Mutations at the putative junction sites of the yeast VMA1 protein, the catalytic subunit of the vacuolar membrane H(+)-ATPase, inhibit its processing by protein splicing.</title>
        <authorList>
            <person name="Hirata R."/>
            <person name="Anraku Y."/>
        </authorList>
    </citation>
    <scope>MUTAGENESIS OF CYS-284 AND CYS-738</scope>
</reference>
<reference key="11">
    <citation type="journal article" date="1993" name="EMBO J.">
        <title>Protein splicing of the yeast TFP1 intervening protein sequence: a model for self-excision.</title>
        <authorList>
            <person name="Cooper A.A."/>
            <person name="Chen Y.-J."/>
            <person name="Lindorfer M.A."/>
            <person name="Stevens T.H."/>
        </authorList>
    </citation>
    <scope>SELF-SPLICING MECHANISM</scope>
</reference>
<reference key="12">
    <citation type="journal article" date="1992" name="Nature">
        <title>Homing of a DNA endonuclease gene by meiotic gene conversion in Saccharomyces cerevisiae.</title>
        <authorList>
            <person name="Gimble F.S."/>
            <person name="Thorner J."/>
        </authorList>
    </citation>
    <scope>FUNCTION OF VDE</scope>
</reference>
<reference key="13">
    <citation type="journal article" date="2001" name="Nat. Cell Biol.">
        <title>Skp1 forms multiple protein complexes, including RAVE, a regulator of V-ATPase assembly.</title>
        <authorList>
            <person name="Seol J.H."/>
            <person name="Shevchenko A."/>
            <person name="Shevchenko A."/>
            <person name="Deshaies R.J."/>
        </authorList>
    </citation>
    <scope>INTERACTION WITH RAV1 AND RAV2</scope>
</reference>
<reference key="14">
    <citation type="journal article" date="2003" name="Nature">
        <title>Global analysis of protein localization in budding yeast.</title>
        <authorList>
            <person name="Huh W.-K."/>
            <person name="Falvo J.V."/>
            <person name="Gerke L.C."/>
            <person name="Carroll A.S."/>
            <person name="Howson R.W."/>
            <person name="Weissman J.S."/>
            <person name="O'Shea E.K."/>
        </authorList>
    </citation>
    <scope>SUBCELLULAR LOCATION [LARGE SCALE ANALYSIS]</scope>
</reference>
<reference key="15">
    <citation type="journal article" date="2003" name="Nature">
        <title>Global analysis of protein expression in yeast.</title>
        <authorList>
            <person name="Ghaemmaghami S."/>
            <person name="Huh W.-K."/>
            <person name="Bower K."/>
            <person name="Howson R.W."/>
            <person name="Belle A."/>
            <person name="Dephoure N."/>
            <person name="O'Shea E.K."/>
            <person name="Weissman J.S."/>
        </authorList>
    </citation>
    <scope>LEVEL OF PROTEIN EXPRESSION [LARGE SCALE ANALYSIS]</scope>
</reference>
<reference key="16">
    <citation type="journal article" date="1992" name="Curr. Biol.">
        <title>Homing in on an endosymbiotic endonuclease.</title>
        <authorList>
            <person name="Grivell L.A."/>
        </authorList>
    </citation>
    <scope>REVIEW</scope>
</reference>
<reference key="17">
    <citation type="journal article" date="2008" name="J. Biol. Chem.">
        <title>Stoichiometry of the peripheral stalk subunits E and G of yeast V1-ATPase determined by mass spectrometry.</title>
        <authorList>
            <person name="Kitagawa N."/>
            <person name="Mazon H."/>
            <person name="Heck A.J.R."/>
            <person name="Wilkens S."/>
        </authorList>
    </citation>
    <scope>FUNCTION</scope>
    <scope>CATALYTIC ACTIVITY</scope>
    <scope>IDENTIFICATION IN THE V-ATPASE COMPLEX</scope>
    <scope>MASS SPECTROMETRY</scope>
    <scope>CLEAVAGE OF INITIATOR METHIONINE</scope>
</reference>
<reference key="18">
    <citation type="journal article" date="2008" name="Mol. Cell. Proteomics">
        <title>A multidimensional chromatography technology for in-depth phosphoproteome analysis.</title>
        <authorList>
            <person name="Albuquerque C.P."/>
            <person name="Smolka M.B."/>
            <person name="Payne S.H."/>
            <person name="Bafna V."/>
            <person name="Eng J."/>
            <person name="Zhou H."/>
        </authorList>
    </citation>
    <scope>PHOSPHORYLATION [LARGE SCALE ANALYSIS] AT THR-131; SER-858 AND SER-928</scope>
    <scope>IDENTIFICATION BY MASS SPECTROMETRY [LARGE SCALE ANALYSIS]</scope>
</reference>
<reference key="19">
    <citation type="journal article" date="2009" name="Science">
        <title>Global analysis of Cdk1 substrate phosphorylation sites provides insights into evolution.</title>
        <authorList>
            <person name="Holt L.J."/>
            <person name="Tuch B.B."/>
            <person name="Villen J."/>
            <person name="Johnson A.D."/>
            <person name="Gygi S.P."/>
            <person name="Morgan D.O."/>
        </authorList>
    </citation>
    <scope>IDENTIFICATION BY MASS SPECTROMETRY [LARGE SCALE ANALYSIS]</scope>
</reference>
<reference key="20">
    <citation type="journal article" date="2012" name="Proc. Natl. Acad. Sci. U.S.A.">
        <title>N-terminal acetylome analyses and functional insights of the N-terminal acetyltransferase NatB.</title>
        <authorList>
            <person name="Van Damme P."/>
            <person name="Lasa M."/>
            <person name="Polevoda B."/>
            <person name="Gazquez C."/>
            <person name="Elosegui-Artola A."/>
            <person name="Kim D.S."/>
            <person name="De Juan-Pardo E."/>
            <person name="Demeyer K."/>
            <person name="Hole K."/>
            <person name="Larrea E."/>
            <person name="Timmerman E."/>
            <person name="Prieto J."/>
            <person name="Arnesen T."/>
            <person name="Sherman F."/>
            <person name="Gevaert K."/>
            <person name="Aldabe R."/>
        </authorList>
    </citation>
    <scope>ACETYLATION [LARGE SCALE ANALYSIS] AT ALA-2</scope>
    <scope>CLEAVAGE OF INITIATOR METHIONINE [LARGE SCALE ANALYSIS]</scope>
    <scope>IDENTIFICATION BY MASS SPECTROMETRY [LARGE SCALE ANALYSIS]</scope>
</reference>
<reference key="21">
    <citation type="journal article" date="1997" name="Cell">
        <title>Crystal structure of PI-SceI, a homing endonuclease with protein splicing activity.</title>
        <authorList>
            <person name="Duan X."/>
            <person name="Gimble F.S."/>
            <person name="Quiocho F.A."/>
        </authorList>
    </citation>
    <scope>X-RAY CRYSTALLOGRAPHY (2.4 ANGSTROMS) OF PI-SCE I</scope>
</reference>
<reference key="22">
    <citation type="journal article" date="2000" name="J. Biol. Chem.">
        <title>Probing the structure of the PI-SceI-DNA complex by affinity cleavage and affinity photocross-linking.</title>
        <authorList>
            <person name="Hu D."/>
            <person name="Crist M."/>
            <person name="Duan X."/>
            <person name="Quiocho F.A."/>
            <person name="Gimble F.S."/>
        </authorList>
    </citation>
    <scope>X-RAY CRYSTALLOGRAPHY (2.0 ANGSTROMS) OF PI-SCE I</scope>
</reference>
<reference key="23">
    <citation type="journal article" date="2000" name="J. Biol. Chem.">
        <title>Structural insights into the protein splicing mechanism of PI-SceI.</title>
        <authorList>
            <person name="Poland B.W."/>
            <person name="Xu M.-Q."/>
            <person name="Quiocho F.A."/>
        </authorList>
    </citation>
    <scope>X-RAY CRYSTALLOGRAPHY (2.1 ANGSTROMS) OF 283-741</scope>
    <scope>MUTAGENESIS OF CYS-284 AND ASN-737</scope>
</reference>
<reference key="24">
    <citation type="journal article" date="2002" name="Nucleic Acids Res.">
        <title>High resolution crystal structure of domain I of the Saccharomyces cerevisiae homing endonuclease PI-SceI.</title>
        <authorList>
            <person name="Werner E."/>
            <person name="Wende W."/>
            <person name="Pingoud A."/>
            <person name="Heinemann U."/>
        </authorList>
    </citation>
    <scope>X-RAY CRYSTALLOGRAPHY (1.35 ANGSTROMS) OF 284-465</scope>
</reference>
<reference evidence="19 20 21" key="25">
    <citation type="journal article" date="2015" name="Nature">
        <title>Electron cryomicroscopy observation of rotational states in a eukaryotic V-ATPase.</title>
        <authorList>
            <person name="Zhao J."/>
            <person name="Benlekbir S."/>
            <person name="Rubinstein J.L."/>
        </authorList>
    </citation>
    <scope>STRUCTURE BY ELECTRON MICROSCOPY (6.90 ANGSTROMS) OF 2-1071</scope>
    <scope>IDENTIFICATION IN THE V-ATPASE COMPLEX</scope>
</reference>
<reference evidence="22 23" key="26">
    <citation type="journal article" date="2016" name="EMBO J.">
        <title>Crystal structure of yeast V1-ATPase in the autoinhibited state.</title>
        <authorList>
            <person name="Oot R.A."/>
            <person name="Kane P.M."/>
            <person name="Berry E.A."/>
            <person name="Wilkens S."/>
        </authorList>
    </citation>
    <scope>X-RAY CRYSTALLOGRAPHY (6.20 ANGSTROMS)</scope>
    <scope>IDENTIFICATION IN THE V-ATPASE COMPLEX</scope>
</reference>
<organism>
    <name type="scientific">Saccharomyces cerevisiae (strain ATCC 204508 / S288c)</name>
    <name type="common">Baker's yeast</name>
    <dbReference type="NCBI Taxonomy" id="559292"/>
    <lineage>
        <taxon>Eukaryota</taxon>
        <taxon>Fungi</taxon>
        <taxon>Dikarya</taxon>
        <taxon>Ascomycota</taxon>
        <taxon>Saccharomycotina</taxon>
        <taxon>Saccharomycetes</taxon>
        <taxon>Saccharomycetales</taxon>
        <taxon>Saccharomycetaceae</taxon>
        <taxon>Saccharomyces</taxon>
    </lineage>
</organism>
<proteinExistence type="evidence at protein level"/>
<dbReference type="EC" id="7.1.2.2" evidence="17 18"/>
<dbReference type="EC" id="3.1.-.-"/>
<dbReference type="EMBL" id="J05409">
    <property type="protein sequence ID" value="AAA34664.1"/>
    <property type="molecule type" value="Genomic_DNA"/>
</dbReference>
<dbReference type="EMBL" id="X83276">
    <property type="protein sequence ID" value="CAA58261.1"/>
    <property type="molecule type" value="Genomic_DNA"/>
</dbReference>
<dbReference type="EMBL" id="Z74233">
    <property type="protein sequence ID" value="CAA98760.1"/>
    <property type="molecule type" value="Genomic_DNA"/>
</dbReference>
<dbReference type="EMBL" id="Z74233">
    <property type="protein sequence ID" value="CAA98761.1"/>
    <property type="status" value="ALT_SEQ"/>
    <property type="molecule type" value="Genomic_DNA"/>
</dbReference>
<dbReference type="EMBL" id="Z74233">
    <property type="protein sequence ID" value="CAA98762.1"/>
    <property type="molecule type" value="Genomic_DNA"/>
</dbReference>
<dbReference type="EMBL" id="X58857">
    <property type="protein sequence ID" value="CAA41657.1"/>
    <property type="molecule type" value="Genomic_DNA"/>
</dbReference>
<dbReference type="EMBL" id="M21609">
    <property type="protein sequence ID" value="AAB63978.1"/>
    <property type="molecule type" value="Genomic_DNA"/>
</dbReference>
<dbReference type="EMBL" id="BK006938">
    <property type="protein sequence ID" value="DAA11677.1"/>
    <property type="molecule type" value="Genomic_DNA"/>
</dbReference>
<dbReference type="PIR" id="A35746">
    <property type="entry name" value="PXBYVA"/>
</dbReference>
<dbReference type="RefSeq" id="NP_010096.1">
    <property type="nucleotide sequence ID" value="NM_001180245.1"/>
</dbReference>
<dbReference type="PDB" id="1DFA">
    <property type="method" value="X-ray"/>
    <property type="resolution" value="2.00 A"/>
    <property type="chains" value="A=284-737"/>
</dbReference>
<dbReference type="PDB" id="1EF0">
    <property type="method" value="X-ray"/>
    <property type="resolution" value="2.10 A"/>
    <property type="chains" value="A/B=283-741"/>
</dbReference>
<dbReference type="PDB" id="1GPP">
    <property type="method" value="X-ray"/>
    <property type="resolution" value="1.35 A"/>
    <property type="chains" value="A=284-466, A=693-736"/>
</dbReference>
<dbReference type="PDB" id="1JVA">
    <property type="method" value="X-ray"/>
    <property type="resolution" value="2.10 A"/>
    <property type="chains" value="A/B=274-747"/>
</dbReference>
<dbReference type="PDB" id="1LWS">
    <property type="method" value="X-ray"/>
    <property type="resolution" value="3.50 A"/>
    <property type="chains" value="A=284-737"/>
</dbReference>
<dbReference type="PDB" id="1LWT">
    <property type="method" value="X-ray"/>
    <property type="resolution" value="3.20 A"/>
    <property type="chains" value="A=284-737"/>
</dbReference>
<dbReference type="PDB" id="1UM2">
    <property type="method" value="X-ray"/>
    <property type="resolution" value="2.90 A"/>
    <property type="chains" value="A/B=284-737, C/D=274-747"/>
</dbReference>
<dbReference type="PDB" id="1VDE">
    <property type="method" value="X-ray"/>
    <property type="resolution" value="2.40 A"/>
    <property type="chains" value="A/B=284-737"/>
</dbReference>
<dbReference type="PDB" id="3J9T">
    <property type="method" value="EM"/>
    <property type="resolution" value="6.90 A"/>
    <property type="chains" value="A/C/E=2-1071"/>
</dbReference>
<dbReference type="PDB" id="3J9U">
    <property type="method" value="EM"/>
    <property type="resolution" value="7.60 A"/>
    <property type="chains" value="A/C/E=2-1071"/>
</dbReference>
<dbReference type="PDB" id="3J9V">
    <property type="method" value="EM"/>
    <property type="resolution" value="8.30 A"/>
    <property type="chains" value="A/C/E=2-1071"/>
</dbReference>
<dbReference type="PDB" id="5BW9">
    <property type="method" value="X-ray"/>
    <property type="resolution" value="7.00 A"/>
    <property type="chains" value="A/B/C/a/b/c=1-1071"/>
</dbReference>
<dbReference type="PDB" id="5D80">
    <property type="method" value="X-ray"/>
    <property type="resolution" value="6.20 A"/>
    <property type="chains" value="A/B/C/a/b/c=1-1071"/>
</dbReference>
<dbReference type="PDB" id="5VOX">
    <property type="method" value="EM"/>
    <property type="resolution" value="6.80 A"/>
    <property type="chains" value="A/C/E=1-1071"/>
</dbReference>
<dbReference type="PDB" id="5VOY">
    <property type="method" value="EM"/>
    <property type="resolution" value="7.90 A"/>
    <property type="chains" value="A/C/E=1-1071"/>
</dbReference>
<dbReference type="PDB" id="5VOZ">
    <property type="method" value="EM"/>
    <property type="resolution" value="7.60 A"/>
    <property type="chains" value="A/C/E=1-1071"/>
</dbReference>
<dbReference type="PDB" id="7FDA">
    <property type="method" value="EM"/>
    <property type="resolution" value="4.20 A"/>
    <property type="chains" value="A/C/E=1-1071"/>
</dbReference>
<dbReference type="PDB" id="7FDB">
    <property type="method" value="EM"/>
    <property type="resolution" value="4.80 A"/>
    <property type="chains" value="A/C/E=1-1071"/>
</dbReference>
<dbReference type="PDB" id="7FDC">
    <property type="method" value="EM"/>
    <property type="resolution" value="6.60 A"/>
    <property type="chains" value="A/C/E=1-1071"/>
</dbReference>
<dbReference type="PDB" id="7FDE">
    <property type="method" value="EM"/>
    <property type="resolution" value="3.80 A"/>
    <property type="chains" value="A/C/E=1-1071"/>
</dbReference>
<dbReference type="PDB" id="7TMM">
    <property type="method" value="EM"/>
    <property type="resolution" value="3.50 A"/>
    <property type="chains" value="A/C/E=1-1071"/>
</dbReference>
<dbReference type="PDB" id="7TMO">
    <property type="method" value="EM"/>
    <property type="resolution" value="3.30 A"/>
    <property type="chains" value="A/C/E=1-1071"/>
</dbReference>
<dbReference type="PDB" id="7TMP">
    <property type="method" value="EM"/>
    <property type="resolution" value="3.30 A"/>
    <property type="chains" value="A/C/E=1-1071"/>
</dbReference>
<dbReference type="PDB" id="7TMQ">
    <property type="method" value="EM"/>
    <property type="resolution" value="3.30 A"/>
    <property type="chains" value="A/C/E=1-1071"/>
</dbReference>
<dbReference type="PDB" id="7TMR">
    <property type="method" value="EM"/>
    <property type="resolution" value="3.50 A"/>
    <property type="chains" value="A/C/E=1-1071"/>
</dbReference>
<dbReference type="PDB" id="9COP">
    <property type="method" value="EM"/>
    <property type="resolution" value="2.70 A"/>
    <property type="chains" value="A/E=1-1071"/>
</dbReference>
<dbReference type="PDBsum" id="1DFA"/>
<dbReference type="PDBsum" id="1EF0"/>
<dbReference type="PDBsum" id="1GPP"/>
<dbReference type="PDBsum" id="1JVA"/>
<dbReference type="PDBsum" id="1LWS"/>
<dbReference type="PDBsum" id="1LWT"/>
<dbReference type="PDBsum" id="1UM2"/>
<dbReference type="PDBsum" id="1VDE"/>
<dbReference type="PDBsum" id="3J9T"/>
<dbReference type="PDBsum" id="3J9U"/>
<dbReference type="PDBsum" id="3J9V"/>
<dbReference type="PDBsum" id="5BW9"/>
<dbReference type="PDBsum" id="5D80"/>
<dbReference type="PDBsum" id="5VOX"/>
<dbReference type="PDBsum" id="5VOY"/>
<dbReference type="PDBsum" id="5VOZ"/>
<dbReference type="PDBsum" id="7FDA"/>
<dbReference type="PDBsum" id="7FDB"/>
<dbReference type="PDBsum" id="7FDC"/>
<dbReference type="PDBsum" id="7FDE"/>
<dbReference type="PDBsum" id="7TMM"/>
<dbReference type="PDBsum" id="7TMO"/>
<dbReference type="PDBsum" id="7TMP"/>
<dbReference type="PDBsum" id="7TMQ"/>
<dbReference type="PDBsum" id="7TMR"/>
<dbReference type="PDBsum" id="9COP"/>
<dbReference type="EMDB" id="EMD-31538"/>
<dbReference type="EMDB" id="EMD-31539"/>
<dbReference type="EMDB" id="EMD-31540"/>
<dbReference type="EMDB" id="EMD-31541"/>
<dbReference type="EMDB" id="EMD-45788"/>
<dbReference type="EMDB" id="EMD-8724"/>
<dbReference type="EMDB" id="EMD-8725"/>
<dbReference type="EMDB" id="EMD-8726"/>
<dbReference type="SMR" id="P17255"/>
<dbReference type="BioGRID" id="31859">
    <property type="interactions" value="564"/>
</dbReference>
<dbReference type="ComplexPortal" id="CPX-1192">
    <property type="entry name" value="Vacuolar proton translocating ATPase complex, Golgi variant"/>
</dbReference>
<dbReference type="ComplexPortal" id="CPX-1193">
    <property type="entry name" value="Vacuolar proton translocating ATPase complex, vacuole variant"/>
</dbReference>
<dbReference type="DIP" id="DIP-2293N"/>
<dbReference type="FunCoup" id="P17255">
    <property type="interactions" value="1388"/>
</dbReference>
<dbReference type="IntAct" id="P17255">
    <property type="interactions" value="132"/>
</dbReference>
<dbReference type="MINT" id="P17255"/>
<dbReference type="STRING" id="4932.YDL185W"/>
<dbReference type="MEROPS" id="N09.001"/>
<dbReference type="REBASE" id="2615">
    <property type="entry name" value="PI-SceI"/>
</dbReference>
<dbReference type="TCDB" id="3.A.2.2.3">
    <property type="family name" value="the h+- or na+-translocating f-type, v-type and a-type atpase (f-atpase) superfamily"/>
</dbReference>
<dbReference type="iPTMnet" id="P17255"/>
<dbReference type="PaxDb" id="4932-YDL185W"/>
<dbReference type="PeptideAtlas" id="P17255"/>
<dbReference type="EnsemblFungi" id="YDL185W_mRNA">
    <property type="protein sequence ID" value="YDL185W"/>
    <property type="gene ID" value="YDL185W"/>
</dbReference>
<dbReference type="GeneID" id="851342"/>
<dbReference type="KEGG" id="sce:YDL185W"/>
<dbReference type="AGR" id="SGD:S000002344"/>
<dbReference type="SGD" id="S000002344">
    <property type="gene designation" value="VMA1"/>
</dbReference>
<dbReference type="VEuPathDB" id="FungiDB:YDL185W"/>
<dbReference type="eggNOG" id="KOG1352">
    <property type="taxonomic scope" value="Eukaryota"/>
</dbReference>
<dbReference type="GeneTree" id="ENSGT00550000074787"/>
<dbReference type="HOGENOM" id="CLU_008162_0_1_1"/>
<dbReference type="InParanoid" id="P17255"/>
<dbReference type="OMA" id="CFAKGTE"/>
<dbReference type="OrthoDB" id="1676488at2759"/>
<dbReference type="BioCyc" id="YEAST:G3O-29571-MONOMER"/>
<dbReference type="Reactome" id="R-SCE-1222556">
    <property type="pathway name" value="ROS and RNS production in phagocytes"/>
</dbReference>
<dbReference type="Reactome" id="R-SCE-77387">
    <property type="pathway name" value="Insulin receptor recycling"/>
</dbReference>
<dbReference type="Reactome" id="R-SCE-917977">
    <property type="pathway name" value="Transferrin endocytosis and recycling"/>
</dbReference>
<dbReference type="Reactome" id="R-SCE-9639288">
    <property type="pathway name" value="Amino acids regulate mTORC1"/>
</dbReference>
<dbReference type="BioGRID-ORCS" id="851342">
    <property type="hits" value="0 hits in 10 CRISPR screens"/>
</dbReference>
<dbReference type="EvolutionaryTrace" id="P17255"/>
<dbReference type="PRO" id="PR:P17255"/>
<dbReference type="Proteomes" id="UP000002311">
    <property type="component" value="Chromosome IV"/>
</dbReference>
<dbReference type="RNAct" id="P17255">
    <property type="molecule type" value="protein"/>
</dbReference>
<dbReference type="GO" id="GO:0000329">
    <property type="term" value="C:fungal-type vacuole membrane"/>
    <property type="evidence" value="ECO:0000314"/>
    <property type="project" value="UniProtKB"/>
</dbReference>
<dbReference type="GO" id="GO:0000139">
    <property type="term" value="C:Golgi membrane"/>
    <property type="evidence" value="ECO:0000303"/>
    <property type="project" value="ComplexPortal"/>
</dbReference>
<dbReference type="GO" id="GO:0033176">
    <property type="term" value="C:proton-transporting V-type ATPase complex"/>
    <property type="evidence" value="ECO:0000353"/>
    <property type="project" value="ComplexPortal"/>
</dbReference>
<dbReference type="GO" id="GO:0016471">
    <property type="term" value="C:vacuolar proton-transporting V-type ATPase complex"/>
    <property type="evidence" value="ECO:0000353"/>
    <property type="project" value="ComplexPortal"/>
</dbReference>
<dbReference type="GO" id="GO:0000221">
    <property type="term" value="C:vacuolar proton-transporting V-type ATPase, V1 domain"/>
    <property type="evidence" value="ECO:0000314"/>
    <property type="project" value="UniProtKB"/>
</dbReference>
<dbReference type="GO" id="GO:0005524">
    <property type="term" value="F:ATP binding"/>
    <property type="evidence" value="ECO:0007669"/>
    <property type="project" value="UniProtKB-KW"/>
</dbReference>
<dbReference type="GO" id="GO:0003677">
    <property type="term" value="F:DNA binding"/>
    <property type="evidence" value="ECO:0007669"/>
    <property type="project" value="UniProtKB-KW"/>
</dbReference>
<dbReference type="GO" id="GO:0004519">
    <property type="term" value="F:endonuclease activity"/>
    <property type="evidence" value="ECO:0007669"/>
    <property type="project" value="UniProtKB-KW"/>
</dbReference>
<dbReference type="GO" id="GO:0003729">
    <property type="term" value="F:mRNA binding"/>
    <property type="evidence" value="ECO:0007005"/>
    <property type="project" value="SGD"/>
</dbReference>
<dbReference type="GO" id="GO:0046961">
    <property type="term" value="F:proton-transporting ATPase activity, rotational mechanism"/>
    <property type="evidence" value="ECO:0000314"/>
    <property type="project" value="SGD"/>
</dbReference>
<dbReference type="GO" id="GO:0046034">
    <property type="term" value="P:ATP metabolic process"/>
    <property type="evidence" value="ECO:0007669"/>
    <property type="project" value="InterPro"/>
</dbReference>
<dbReference type="GO" id="GO:0048388">
    <property type="term" value="P:endosomal lumen acidification"/>
    <property type="evidence" value="ECO:0000303"/>
    <property type="project" value="ComplexPortal"/>
</dbReference>
<dbReference type="GO" id="GO:0061795">
    <property type="term" value="P:Golgi lumen acidification"/>
    <property type="evidence" value="ECO:0000303"/>
    <property type="project" value="ComplexPortal"/>
</dbReference>
<dbReference type="GO" id="GO:0016539">
    <property type="term" value="P:intein-mediated protein splicing"/>
    <property type="evidence" value="ECO:0007669"/>
    <property type="project" value="InterPro"/>
</dbReference>
<dbReference type="GO" id="GO:0006314">
    <property type="term" value="P:intron homing"/>
    <property type="evidence" value="ECO:0007669"/>
    <property type="project" value="UniProtKB-KW"/>
</dbReference>
<dbReference type="GO" id="GO:1902600">
    <property type="term" value="P:proton transmembrane transport"/>
    <property type="evidence" value="ECO:0000314"/>
    <property type="project" value="ComplexPortal"/>
</dbReference>
<dbReference type="GO" id="GO:0007035">
    <property type="term" value="P:vacuolar acidification"/>
    <property type="evidence" value="ECO:0000315"/>
    <property type="project" value="SGD"/>
</dbReference>
<dbReference type="CDD" id="cd18111">
    <property type="entry name" value="ATP-synt_V_A-type_alpha_C"/>
    <property type="match status" value="1"/>
</dbReference>
<dbReference type="CDD" id="cd18119">
    <property type="entry name" value="ATP-synt_V_A-type_alpha_N"/>
    <property type="match status" value="1"/>
</dbReference>
<dbReference type="CDD" id="cd00081">
    <property type="entry name" value="Hint"/>
    <property type="match status" value="1"/>
</dbReference>
<dbReference type="CDD" id="cd01134">
    <property type="entry name" value="V_A-ATPase_A"/>
    <property type="match status" value="1"/>
</dbReference>
<dbReference type="FunFam" id="2.40.30.20:FF:000002">
    <property type="entry name" value="V-type proton ATPase catalytic subunit A"/>
    <property type="match status" value="1"/>
</dbReference>
<dbReference type="FunFam" id="2.40.50.100:FF:000008">
    <property type="entry name" value="V-type proton ATPase catalytic subunit A"/>
    <property type="match status" value="1"/>
</dbReference>
<dbReference type="FunFam" id="1.10.1140.10:FF:000003">
    <property type="entry name" value="Vacuolar ATP synthase catalytic subunit A"/>
    <property type="match status" value="1"/>
</dbReference>
<dbReference type="FunFam" id="3.40.50.300:FF:001296">
    <property type="entry name" value="Vacuolar membrane ATPase subunit a"/>
    <property type="match status" value="1"/>
</dbReference>
<dbReference type="Gene3D" id="2.40.30.20">
    <property type="match status" value="1"/>
</dbReference>
<dbReference type="Gene3D" id="2.40.50.100">
    <property type="match status" value="1"/>
</dbReference>
<dbReference type="Gene3D" id="1.10.1140.10">
    <property type="entry name" value="Bovine Mitochondrial F1-atpase, Atp Synthase Beta Chain, Chain D, domain 3"/>
    <property type="match status" value="1"/>
</dbReference>
<dbReference type="Gene3D" id="3.10.28.10">
    <property type="entry name" value="Homing endonucleases"/>
    <property type="match status" value="2"/>
</dbReference>
<dbReference type="Gene3D" id="3.40.50.300">
    <property type="entry name" value="P-loop containing nucleotide triphosphate hydrolases"/>
    <property type="match status" value="2"/>
</dbReference>
<dbReference type="InterPro" id="IPR055190">
    <property type="entry name" value="ATP-synt_VA_C"/>
</dbReference>
<dbReference type="InterPro" id="IPR031686">
    <property type="entry name" value="ATP-synth_a_Xtn"/>
</dbReference>
<dbReference type="InterPro" id="IPR023366">
    <property type="entry name" value="ATP_synth_asu-like_sf"/>
</dbReference>
<dbReference type="InterPro" id="IPR020003">
    <property type="entry name" value="ATPase_a/bsu_AS"/>
</dbReference>
<dbReference type="InterPro" id="IPR004100">
    <property type="entry name" value="ATPase_F1/V1/A1_a/bsu_N"/>
</dbReference>
<dbReference type="InterPro" id="IPR036121">
    <property type="entry name" value="ATPase_F1/V1/A1_a/bsu_N_sf"/>
</dbReference>
<dbReference type="InterPro" id="IPR000194">
    <property type="entry name" value="ATPase_F1/V1/A1_a/bsu_nucl-bd"/>
</dbReference>
<dbReference type="InterPro" id="IPR024034">
    <property type="entry name" value="ATPase_F1/V1_b/a_C"/>
</dbReference>
<dbReference type="InterPro" id="IPR003586">
    <property type="entry name" value="Hint_dom_C"/>
</dbReference>
<dbReference type="InterPro" id="IPR003587">
    <property type="entry name" value="Hint_dom_N"/>
</dbReference>
<dbReference type="InterPro" id="IPR036844">
    <property type="entry name" value="Hint_dom_sf"/>
</dbReference>
<dbReference type="InterPro" id="IPR007868">
    <property type="entry name" value="Hom_end_hint"/>
</dbReference>
<dbReference type="InterPro" id="IPR007869">
    <property type="entry name" value="Homing_endonuc_PI-Sce"/>
</dbReference>
<dbReference type="InterPro" id="IPR027434">
    <property type="entry name" value="Homing_endonucl"/>
</dbReference>
<dbReference type="InterPro" id="IPR006142">
    <property type="entry name" value="INTEIN"/>
</dbReference>
<dbReference type="InterPro" id="IPR030934">
    <property type="entry name" value="Intein_C"/>
</dbReference>
<dbReference type="InterPro" id="IPR004042">
    <property type="entry name" value="Intein_endonuc_central"/>
</dbReference>
<dbReference type="InterPro" id="IPR006141">
    <property type="entry name" value="Intein_N"/>
</dbReference>
<dbReference type="InterPro" id="IPR027417">
    <property type="entry name" value="P-loop_NTPase"/>
</dbReference>
<dbReference type="InterPro" id="IPR022878">
    <property type="entry name" value="V-ATPase_asu"/>
</dbReference>
<dbReference type="PANTHER" id="PTHR43607:SF1">
    <property type="entry name" value="H(+)-TRANSPORTING TWO-SECTOR ATPASE"/>
    <property type="match status" value="1"/>
</dbReference>
<dbReference type="PANTHER" id="PTHR43607">
    <property type="entry name" value="V-TYPE PROTON ATPASE CATALYTIC SUBUNIT A"/>
    <property type="match status" value="1"/>
</dbReference>
<dbReference type="Pfam" id="PF00006">
    <property type="entry name" value="ATP-synt_ab"/>
    <property type="match status" value="2"/>
</dbReference>
<dbReference type="Pfam" id="PF02874">
    <property type="entry name" value="ATP-synt_ab_N"/>
    <property type="match status" value="1"/>
</dbReference>
<dbReference type="Pfam" id="PF16886">
    <property type="entry name" value="ATP-synt_ab_Xtn"/>
    <property type="match status" value="1"/>
</dbReference>
<dbReference type="Pfam" id="PF22919">
    <property type="entry name" value="ATP-synt_VA_C"/>
    <property type="match status" value="1"/>
</dbReference>
<dbReference type="Pfam" id="PF05204">
    <property type="entry name" value="Hom_end"/>
    <property type="match status" value="2"/>
</dbReference>
<dbReference type="Pfam" id="PF05203">
    <property type="entry name" value="Hom_end_hint"/>
    <property type="match status" value="1"/>
</dbReference>
<dbReference type="PRINTS" id="PR00379">
    <property type="entry name" value="INTEIN"/>
</dbReference>
<dbReference type="SMART" id="SM00305">
    <property type="entry name" value="HintC"/>
    <property type="match status" value="1"/>
</dbReference>
<dbReference type="SMART" id="SM00306">
    <property type="entry name" value="HintN"/>
    <property type="match status" value="1"/>
</dbReference>
<dbReference type="SUPFAM" id="SSF47917">
    <property type="entry name" value="C-terminal domain of alpha and beta subunits of F1 ATP synthase"/>
    <property type="match status" value="1"/>
</dbReference>
<dbReference type="SUPFAM" id="SSF51294">
    <property type="entry name" value="Hedgehog/intein (Hint) domain"/>
    <property type="match status" value="1"/>
</dbReference>
<dbReference type="SUPFAM" id="SSF55608">
    <property type="entry name" value="Homing endonucleases"/>
    <property type="match status" value="2"/>
</dbReference>
<dbReference type="SUPFAM" id="SSF50615">
    <property type="entry name" value="N-terminal domain of alpha and beta subunits of F1 ATP synthase"/>
    <property type="match status" value="1"/>
</dbReference>
<dbReference type="SUPFAM" id="SSF52540">
    <property type="entry name" value="P-loop containing nucleoside triphosphate hydrolases"/>
    <property type="match status" value="2"/>
</dbReference>
<dbReference type="PROSITE" id="PS00152">
    <property type="entry name" value="ATPASE_ALPHA_BETA"/>
    <property type="match status" value="1"/>
</dbReference>
<dbReference type="PROSITE" id="PS50818">
    <property type="entry name" value="INTEIN_C_TER"/>
    <property type="match status" value="1"/>
</dbReference>
<dbReference type="PROSITE" id="PS50819">
    <property type="entry name" value="INTEIN_ENDONUCLEASE"/>
    <property type="match status" value="1"/>
</dbReference>
<dbReference type="PROSITE" id="PS50817">
    <property type="entry name" value="INTEIN_N_TER"/>
    <property type="match status" value="1"/>
</dbReference>
<comment type="function">
    <text evidence="10 11">Catalytic subunit of the V1 complex of vacuolar(H+)-ATPase (V-ATPase), a multisubunit enzyme composed of a peripheral complex (V1) that hydrolyzes ATP and a membrane integral complex (V0) that translocates protons (PubMed:18055462, PubMed:2139027). V-ATPase is responsible for acidifying and maintaining the pH of intracellular compartments (PubMed:18055462, PubMed:2139027).</text>
</comment>
<comment type="function">
    <text evidence="9">PI-SceI is an endonuclease that can cleave at a site present in a VMA1 allele that lacks the derived endonuclease segment of the open reading frame; cleavage at this site only occurs during meiosis and initiates 'homing', a genetic event that converts a VMA1 allele lacking VDE into one that contains it.</text>
</comment>
<comment type="catalytic activity">
    <reaction evidence="17 18">
        <text>ATP + H2O + 4 H(+)(in) = ADP + phosphate + 5 H(+)(out)</text>
        <dbReference type="Rhea" id="RHEA:57720"/>
        <dbReference type="ChEBI" id="CHEBI:15377"/>
        <dbReference type="ChEBI" id="CHEBI:15378"/>
        <dbReference type="ChEBI" id="CHEBI:30616"/>
        <dbReference type="ChEBI" id="CHEBI:43474"/>
        <dbReference type="ChEBI" id="CHEBI:456216"/>
        <dbReference type="EC" id="7.1.2.2"/>
    </reaction>
</comment>
<comment type="subunit">
    <text evidence="4 10 12 13">V-ATPase is a heteromultimeric enzyme composed of a peripheral catalytic V1 complex (components A to H) attached to an integral membrane V0 proton pore complex (components: a, c, c', c'', d, e, f and VOA1) (PubMed:18055462, PubMed:25971514, PubMed:27295975). Interacts with RAV1 and RAV2 components of the RAVE complex, which are essential for the stability and assembly of V-ATPase (PubMed:11283612).</text>
</comment>
<comment type="interaction">
    <interactant intactId="EBI-20245">
        <id>P17255</id>
    </interactant>
    <interactant intactId="EBI-25471">
        <id>P47104</id>
        <label>RAV1</label>
    </interactant>
    <organismsDiffer>false</organismsDiffer>
    <experiments>3</experiments>
</comment>
<comment type="interaction">
    <interactant intactId="EBI-20245">
        <id>P17255</id>
    </interactant>
    <interactant intactId="EBI-20201">
        <id>P32366</id>
        <label>VMA6</label>
    </interactant>
    <organismsDiffer>false</organismsDiffer>
    <experiments>7</experiments>
</comment>
<comment type="subcellular location">
    <subcellularLocation>
        <location evidence="7 11">Vacuole membrane</location>
        <topology evidence="16">Peripheral membrane protein</topology>
        <orientation evidence="16">Cytoplasmic side</orientation>
    </subcellularLocation>
</comment>
<comment type="PTM">
    <text>This protein undergoes a protein self splicing that involves a post-translational excision of the VDE intervening region (intein) followed by peptide ligation.</text>
</comment>
<comment type="mass spectrometry" mass="67642.1" error="28.0" method="Electrospray" evidence="10"/>
<comment type="miscellaneous">
    <text evidence="8">Present with 199895 molecules/cell in log phase SD medium.</text>
</comment>
<comment type="similarity">
    <text evidence="16">Belongs to the ATPase alpha/beta chains family.</text>
</comment>
<comment type="online information" name="Description of Sce VMA in Inbase">
    <link uri="http://tools.neb.com/inbase/intein.php?name=Sce+VMA"/>
</comment>
<evidence type="ECO:0000250" key="1">
    <source>
        <dbReference type="UniProtKB" id="P38606"/>
    </source>
</evidence>
<evidence type="ECO:0000255" key="2">
    <source>
        <dbReference type="PROSITE-ProRule" id="PRU00273"/>
    </source>
</evidence>
<evidence type="ECO:0000269" key="3">
    <source>
    </source>
</evidence>
<evidence type="ECO:0000269" key="4">
    <source>
    </source>
</evidence>
<evidence type="ECO:0000269" key="5">
    <source>
    </source>
</evidence>
<evidence type="ECO:0000269" key="6">
    <source>
    </source>
</evidence>
<evidence type="ECO:0000269" key="7">
    <source>
    </source>
</evidence>
<evidence type="ECO:0000269" key="8">
    <source>
    </source>
</evidence>
<evidence type="ECO:0000269" key="9">
    <source>
    </source>
</evidence>
<evidence type="ECO:0000269" key="10">
    <source>
    </source>
</evidence>
<evidence type="ECO:0000269" key="11">
    <source>
    </source>
</evidence>
<evidence type="ECO:0000269" key="12">
    <source>
    </source>
</evidence>
<evidence type="ECO:0000269" key="13">
    <source>
    </source>
</evidence>
<evidence type="ECO:0000269" key="14">
    <source ref="6"/>
</evidence>
<evidence type="ECO:0000303" key="15">
    <source>
    </source>
</evidence>
<evidence type="ECO:0000305" key="16"/>
<evidence type="ECO:0000305" key="17">
    <source>
    </source>
</evidence>
<evidence type="ECO:0000305" key="18">
    <source>
    </source>
</evidence>
<evidence type="ECO:0007744" key="19">
    <source>
        <dbReference type="PDB" id="3J9T"/>
    </source>
</evidence>
<evidence type="ECO:0007744" key="20">
    <source>
        <dbReference type="PDB" id="3J9U"/>
    </source>
</evidence>
<evidence type="ECO:0007744" key="21">
    <source>
        <dbReference type="PDB" id="3J9V"/>
    </source>
</evidence>
<evidence type="ECO:0007744" key="22">
    <source>
        <dbReference type="PDB" id="5BW9"/>
    </source>
</evidence>
<evidence type="ECO:0007744" key="23">
    <source>
        <dbReference type="PDB" id="5D80"/>
    </source>
</evidence>
<evidence type="ECO:0007744" key="24">
    <source>
    </source>
</evidence>
<evidence type="ECO:0007744" key="25">
    <source>
    </source>
</evidence>
<evidence type="ECO:0007829" key="26">
    <source>
        <dbReference type="PDB" id="1DFA"/>
    </source>
</evidence>
<evidence type="ECO:0007829" key="27">
    <source>
        <dbReference type="PDB" id="1EF0"/>
    </source>
</evidence>
<evidence type="ECO:0007829" key="28">
    <source>
        <dbReference type="PDB" id="1GPP"/>
    </source>
</evidence>
<evidence type="ECO:0007829" key="29">
    <source>
        <dbReference type="PDB" id="1LWT"/>
    </source>
</evidence>
<evidence type="ECO:0007829" key="30">
    <source>
        <dbReference type="PDB" id="1UM2"/>
    </source>
</evidence>
<evidence type="ECO:0007829" key="31">
    <source>
        <dbReference type="PDB" id="1VDE"/>
    </source>
</evidence>
<evidence type="ECO:0007829" key="32">
    <source>
        <dbReference type="PDB" id="7TMM"/>
    </source>
</evidence>
<evidence type="ECO:0007829" key="33">
    <source>
        <dbReference type="PDB" id="7TMO"/>
    </source>
</evidence>
<evidence type="ECO:0007829" key="34">
    <source>
        <dbReference type="PDB" id="7TMP"/>
    </source>
</evidence>
<evidence type="ECO:0007829" key="35">
    <source>
        <dbReference type="PDB" id="7TMQ"/>
    </source>
</evidence>
<evidence type="ECO:0007829" key="36">
    <source>
        <dbReference type="PDB" id="7TMR"/>
    </source>
</evidence>
<accession>P17255</accession>
<accession>D6VRG7</accession>
<accession>O74301</accession>
<accession>Q9Y7W5</accession>